<evidence type="ECO:0000250" key="1"/>
<evidence type="ECO:0000255" key="2"/>
<evidence type="ECO:0000256" key="3">
    <source>
        <dbReference type="SAM" id="MobiDB-lite"/>
    </source>
</evidence>
<evidence type="ECO:0000305" key="4"/>
<name>ENV_HV2CA</name>
<reference key="1">
    <citation type="journal article" date="1991" name="J. Gen. Virol.">
        <title>Nucleotide sequence of a Guinea-Bissau-derived human immunodeficiency virus type 2 proviral clone (HIV-2CAM2).</title>
        <authorList>
            <person name="Tristem M."/>
            <person name="Hill F."/>
            <person name="Karpas A."/>
        </authorList>
    </citation>
    <scope>NUCLEOTIDE SEQUENCE [GENOMIC DNA]</scope>
</reference>
<reference key="2">
    <citation type="journal article" date="2002" name="J. Gen. Virol.">
        <title>Human immunodeficiency virus type 2.</title>
        <authorList>
            <person name="Reeves J.D."/>
            <person name="Doms R.W."/>
        </authorList>
    </citation>
    <scope>REVIEW</scope>
</reference>
<organism>
    <name type="scientific">Human immunodeficiency virus type 2 subtype A (isolate CAM2)</name>
    <name type="common">HIV-2</name>
    <dbReference type="NCBI Taxonomy" id="11715"/>
    <lineage>
        <taxon>Viruses</taxon>
        <taxon>Riboviria</taxon>
        <taxon>Pararnavirae</taxon>
        <taxon>Artverviricota</taxon>
        <taxon>Revtraviricetes</taxon>
        <taxon>Ortervirales</taxon>
        <taxon>Retroviridae</taxon>
        <taxon>Orthoretrovirinae</taxon>
        <taxon>Lentivirus</taxon>
        <taxon>Human immunodeficiency virus 2</taxon>
    </lineage>
</organism>
<protein>
    <recommendedName>
        <fullName>Envelope glycoprotein gp160</fullName>
    </recommendedName>
    <alternativeName>
        <fullName>Env polyprotein</fullName>
    </alternativeName>
    <component>
        <recommendedName>
            <fullName>Surface protein gp120</fullName>
            <shortName>SU</shortName>
        </recommendedName>
        <alternativeName>
            <fullName>Glycoprotein 120</fullName>
            <shortName>gp120</shortName>
        </alternativeName>
    </component>
    <component>
        <recommendedName>
            <fullName>Transmembrane protein gp41</fullName>
            <shortName>TM</shortName>
        </recommendedName>
        <alternativeName>
            <fullName>Glycoprotein 41</fullName>
            <shortName>gp41</shortName>
        </alternativeName>
    </component>
</protein>
<dbReference type="EMBL" id="D00835">
    <property type="protein sequence ID" value="BAA00716.1"/>
    <property type="molecule type" value="Genomic_DNA"/>
</dbReference>
<dbReference type="PIR" id="F38475">
    <property type="entry name" value="VCLJCT"/>
</dbReference>
<dbReference type="SMR" id="P24105"/>
<dbReference type="GlyCosmos" id="P24105">
    <property type="glycosylation" value="26 sites, No reported glycans"/>
</dbReference>
<dbReference type="Proteomes" id="UP000007421">
    <property type="component" value="Segment"/>
</dbReference>
<dbReference type="GO" id="GO:0044175">
    <property type="term" value="C:host cell endosome membrane"/>
    <property type="evidence" value="ECO:0007669"/>
    <property type="project" value="UniProtKB-SubCell"/>
</dbReference>
<dbReference type="GO" id="GO:0020002">
    <property type="term" value="C:host cell plasma membrane"/>
    <property type="evidence" value="ECO:0007669"/>
    <property type="project" value="UniProtKB-SubCell"/>
</dbReference>
<dbReference type="GO" id="GO:0016020">
    <property type="term" value="C:membrane"/>
    <property type="evidence" value="ECO:0007669"/>
    <property type="project" value="UniProtKB-KW"/>
</dbReference>
<dbReference type="GO" id="GO:0019031">
    <property type="term" value="C:viral envelope"/>
    <property type="evidence" value="ECO:0007669"/>
    <property type="project" value="UniProtKB-KW"/>
</dbReference>
<dbReference type="GO" id="GO:0055036">
    <property type="term" value="C:virion membrane"/>
    <property type="evidence" value="ECO:0007669"/>
    <property type="project" value="UniProtKB-SubCell"/>
</dbReference>
<dbReference type="GO" id="GO:0005198">
    <property type="term" value="F:structural molecule activity"/>
    <property type="evidence" value="ECO:0007669"/>
    <property type="project" value="InterPro"/>
</dbReference>
<dbReference type="GO" id="GO:0075512">
    <property type="term" value="P:clathrin-dependent endocytosis of virus by host cell"/>
    <property type="evidence" value="ECO:0007669"/>
    <property type="project" value="UniProtKB-KW"/>
</dbReference>
<dbReference type="GO" id="GO:0039654">
    <property type="term" value="P:fusion of virus membrane with host endosome membrane"/>
    <property type="evidence" value="ECO:0007669"/>
    <property type="project" value="UniProtKB-KW"/>
</dbReference>
<dbReference type="GO" id="GO:0052170">
    <property type="term" value="P:symbiont-mediated suppression of host innate immune response"/>
    <property type="evidence" value="ECO:0007669"/>
    <property type="project" value="UniProtKB-KW"/>
</dbReference>
<dbReference type="GO" id="GO:0039587">
    <property type="term" value="P:symbiont-mediated-mediated suppression of host tetherin activity"/>
    <property type="evidence" value="ECO:0007669"/>
    <property type="project" value="UniProtKB-KW"/>
</dbReference>
<dbReference type="GO" id="GO:0019062">
    <property type="term" value="P:virion attachment to host cell"/>
    <property type="evidence" value="ECO:0007669"/>
    <property type="project" value="UniProtKB-KW"/>
</dbReference>
<dbReference type="CDD" id="cd09909">
    <property type="entry name" value="HIV-1-like_HR1-HR2"/>
    <property type="match status" value="1"/>
</dbReference>
<dbReference type="Gene3D" id="1.10.287.210">
    <property type="match status" value="1"/>
</dbReference>
<dbReference type="Gene3D" id="2.170.40.20">
    <property type="entry name" value="Human immunodeficiency virus 1, Gp160, envelope glycoprotein"/>
    <property type="match status" value="2"/>
</dbReference>
<dbReference type="InterPro" id="IPR036377">
    <property type="entry name" value="Gp120_core_sf"/>
</dbReference>
<dbReference type="InterPro" id="IPR000328">
    <property type="entry name" value="GP41-like"/>
</dbReference>
<dbReference type="InterPro" id="IPR000777">
    <property type="entry name" value="HIV1_Gp120"/>
</dbReference>
<dbReference type="Pfam" id="PF00516">
    <property type="entry name" value="GP120"/>
    <property type="match status" value="1"/>
</dbReference>
<dbReference type="Pfam" id="PF00517">
    <property type="entry name" value="GP41"/>
    <property type="match status" value="1"/>
</dbReference>
<dbReference type="SUPFAM" id="SSF56502">
    <property type="entry name" value="gp120 core"/>
    <property type="match status" value="1"/>
</dbReference>
<dbReference type="SUPFAM" id="SSF58069">
    <property type="entry name" value="Virus ectodomain"/>
    <property type="match status" value="1"/>
</dbReference>
<accession>P24105</accession>
<gene>
    <name type="primary">env</name>
</gene>
<sequence>MERGRNQLLIAILLASACLIYCRQQYVTVFYGVPAWKNASIPLFCATKNRDTWGTIQCLPDNDDYQEIPLNVTEAFDAWDNTITEQAIEDVWNLFETSIKPCVKLTPLCVAMKCNISTSDTTMIRTTTPSTAKEAPISDNSPCIRTNNCSGLEEEKIVKCHFNMTGLERDKKKQYNETWYSSDVVCDNSTDQTTNETTCYMNHCNTSVITESCDKHYWDAMRFRYCAPPGFAILRCNDTKYSGFAPNCSKVVASTCTRMMETQTSTWFGFNGTRAENRTYIYWHGKDNRTIISLNKHYNLSMYCRRPGNKTVVPITLMSGQRFHSRPIINKRPRQAWCWFKGNWTEAMQEVKQTLAEHPRYKGTKNITDITFKAPERGSDPEVTYMWSNCRGEFFYCNMTWFLNWVENKPNTTKRNYAPCHIRQIINTWHKVGKNVYLPPREGELTCNSTVTSIIANIDERDNQTTNITFSADVAELYRLELGDYKLVEITPIGFAPTSQKRYSPAHGRPKRGAFVLGFLGFLTTAGVAMGTASLTLSAQSRTLLAGIVQQQQQLLDVVKRQQELLRLTVWGTKILQARVTAIEKYLKDQAQLNSWGCAFRQVCHTTVPWANESLTPDWNNMTWQEWEQKVRYLEANISQSLEEAQLQQEKNMYELQKLNNWDVFTNWFDLTSWISYIQYGVYIVVGIIVLRIVIYVVQMLSRLRKGYRPVFSSSPGYIQQIHIHKDPEQPASEETEEDVGGNGGDRSWPWQIEYIHFLIRQLIRLLTGLYNICRNLLSRIFQTLQPILQNLRDWLRPKVAFLQYGCEWIQEAFQAAARAARETLAGACRDVWGMLQRIGRGILAVPRRIRQGAELALL</sequence>
<keyword id="KW-0014">AIDS</keyword>
<keyword id="KW-0053">Apoptosis</keyword>
<keyword id="KW-1165">Clathrin-mediated endocytosis of virus by host</keyword>
<keyword id="KW-0165">Cleavage on pair of basic residues</keyword>
<keyword id="KW-0175">Coiled coil</keyword>
<keyword id="KW-1015">Disulfide bond</keyword>
<keyword id="KW-1170">Fusion of virus membrane with host endosomal membrane</keyword>
<keyword id="KW-1168">Fusion of virus membrane with host membrane</keyword>
<keyword id="KW-0325">Glycoprotein</keyword>
<keyword id="KW-1032">Host cell membrane</keyword>
<keyword id="KW-1039">Host endosome</keyword>
<keyword id="KW-1043">Host membrane</keyword>
<keyword id="KW-0945">Host-virus interaction</keyword>
<keyword id="KW-1090">Inhibition of host innate immune response by virus</keyword>
<keyword id="KW-1084">Inhibition of host tetherin by virus</keyword>
<keyword id="KW-0449">Lipoprotein</keyword>
<keyword id="KW-0472">Membrane</keyword>
<keyword id="KW-0564">Palmitate</keyword>
<keyword id="KW-0732">Signal</keyword>
<keyword id="KW-0812">Transmembrane</keyword>
<keyword id="KW-1133">Transmembrane helix</keyword>
<keyword id="KW-1161">Viral attachment to host cell</keyword>
<keyword id="KW-0261">Viral envelope protein</keyword>
<keyword id="KW-0899">Viral immunoevasion</keyword>
<keyword id="KW-1162">Viral penetration into host cytoplasm</keyword>
<keyword id="KW-0946">Virion</keyword>
<keyword id="KW-1164">Virus endocytosis by host</keyword>
<keyword id="KW-1160">Virus entry into host cell</keyword>
<organismHost>
    <name type="scientific">Homo sapiens</name>
    <name type="common">Human</name>
    <dbReference type="NCBI Taxonomy" id="9606"/>
</organismHost>
<comment type="function">
    <text evidence="1">The surface protein gp120 (SU) attaches the virus to the host lymphoid cell by binding to the primary receptor CD4. This interaction induces a structural rearrangement creating a high affinity binding site for a chemokine coreceptor like CXCR4 and/or CCR5. This peculiar 2 stage receptor-interaction strategy allows gp120 to maintain the highly conserved coreceptor-binding site in a cryptic conformation, protected from neutralizing antibodies. Since CD4 also displays a binding site for the disulfide-isomerase P4HB/PDI, a P4HB/PDI-CD4-CXCR4-gp120 complex may form. In that complex, P4HB/PDI could reach and reduce gp120 disulfide bonds, causing major conformational changes in gp120. TXN, another PDI family member could also be involved in disulfide rearrangements in Env during fusion. These changes are transmitted to the transmembrane protein gp41 and are thought to activate its fusogenic potential by unmasking its fusion peptide (By similarity).</text>
</comment>
<comment type="function">
    <text evidence="1">The surface protein gp120 is a ligand for CD209/DC-SIGN and CLEC4M/DC-SIGNR, which are respectively found on dendritic cells (DCs), and on endothelial cells of liver sinusoids and lymph node sinuses. These interactions allow capture of viral particles at mucosal surfaces by these cells and subsequent transmission to permissive cells. DCs are professional antigen presenting cells, critical for host immunity by inducing specific immune responses against a broad variety of pathogens. They act as sentinels in various tissues where they take up antigen, process it, and present it to T-cells following migration to lymphoid organs. HIV subverts the migration properties of dendritic cells to gain access to CD4+ T-cells in lymph nodes. Virus transmission to permissive T-cells occurs either in trans (without DCs infection, through viral capture and transmission), or in cis (following DCs productive infection, through the usual CD4-gp120 interaction), thereby inducing a robust infection. In trans infection, bound virions remain infectious over days and it is proposed that they are not degraded, but protected in non-lysosomal acidic organelles within the DCs close to the cell membrane thus contributing to the viral infectious potential during DCs' migration from the periphery to the lymphoid tissues. On arrival at lymphoid tissues, intact virions recycle back to DCs' cell surface allowing virus transmission to CD4+ T-cells. Virion capture also seems to lead to MHC-II-restricted viral antigen presentation, and probably to the activation of HIV-specific CD4+ cells (By similarity).</text>
</comment>
<comment type="function">
    <text evidence="1">The transmembrane protein gp41 (TM) acts as a class I viral fusion protein. Under the current model, the protein has at least 3 conformational states: pre-fusion native state, pre-hairpin intermediate state, and post-fusion hairpin state. During fusion of viral and target intracellular membranes, the coiled coil regions (heptad repeats) assume a trimer-of-hairpins structure, positioning the fusion peptide in close proximity to the C-terminal region of the ectodomain. The formation of this structure appears to drive apposition and subsequent fusion of viral and target cell membranes. Complete fusion occurs in host cell endosomes and is dynamin-dependent, however some lipid transfer might occur at the plasma membrane. The virus undergoes clathrin-dependent internalization long before endosomal fusion, thus minimizing the surface exposure of conserved viral epitopes during fusion and reducing the efficacy of inhibitors targeting these epitopes. Membranes fusion leads to delivery of the nucleocapsid into the cytoplasm (By similarity).</text>
</comment>
<comment type="function">
    <text evidence="1">The envelope glycoprotein gp160 precursor down-modulates cell surface CD4 antigen by interacting with it in the endoplasmic reticulum and blocking its transport to the cell surface.</text>
</comment>
<comment type="function">
    <text evidence="1">The gp120-gp41 heterodimer seems to contribute to T-cell depletion during HIV-1 infection. The envelope glycoproteins expressed on the surface of infected cells induce apoptosis through an interaction with uninfected cells expressing the receptor (CD4) and the coreceptors CXCR4 or CCR5. This type of bystander killing may be obtained by at least three distinct mechanisms. First, the interaction between the 2 cells can induce cellular fusion followed by nuclear fusion within the syncytium. Syncytia are condemned to die from apoptosis. Second, the 2 interacting cells may not fuse entirely and simply exchange plasma membrane lipids, after a sort of hemifusion process, followed by rapid death. Third, it is possible that virus-infected cells, on the point of undergoing apoptosis, fuse with CD4-expressing cells, in which case apoptosis is rapidly transmitted from one cell to the other and thus occurs in a sort of contagious fashion (By similarity).</text>
</comment>
<comment type="function">
    <text evidence="1">The gp120-gp41 heterodimer allows rapid transcytosis of the virus through CD4 negative cells such as simple epithelial monolayers of the intestinal, rectal and endocervical epithelial barriers. Both gp120 and gp41 specifically recognize glycosphingolipids galactosyl-ceramide (GalCer) or 3' sulfo-galactosyl-ceramide (GalS) present in the lipid rafts structures of epithelial cells. Binding to these alternative receptors allows the rapid transcytosis of the virus through the epithelial cells. This transcytotic vesicle-mediated transport of virions from the apical side to the basolateral side of the epithelial cells does not involve infection of the cells themselves (By similarity).</text>
</comment>
<comment type="subunit">
    <molecule>Surface protein gp120</molecule>
    <text evidence="1">The mature envelope protein (Env) consists of a homotrimer of non-covalently associated gp120-gp41 heterodimers. The resulting complex protrudes from the virus surface as a spike. There seems to be as few as 10 spikes on the average virion. Interacts with human CD4, CCR5 and CXCR4, to form a P4HB/PDI-CD4-CXCR4-gp120 complex. Gp120 also interacts with the C-type lectins CD209/DC-SIGN and CLEC4M/DC-SIGNR (collectively referred to as DC-SIGN(R)). Gp120 and gp41 interact with GalCer (By similarity).</text>
</comment>
<comment type="subunit">
    <molecule>Transmembrane protein gp41</molecule>
    <text evidence="1">The mature envelope protein (Env) consists of a homotrimer of non-covalently associated gp120-gp41 heterodimers. The resulting complex protrudes from the virus surface as a spike. There seems to be as few as 10 spikes on the average virion.</text>
</comment>
<comment type="subcellular location">
    <molecule>Transmembrane protein gp41</molecule>
    <subcellularLocation>
        <location evidence="1">Virion membrane</location>
        <topology evidence="1">Single-pass type I membrane protein</topology>
    </subcellularLocation>
    <subcellularLocation>
        <location evidence="1">Host cell membrane</location>
        <topology evidence="1">Single-pass type I membrane protein</topology>
    </subcellularLocation>
    <subcellularLocation>
        <location evidence="4">Host endosome membrane</location>
        <topology evidence="4">Single-pass type I membrane protein</topology>
    </subcellularLocation>
    <text evidence="1">It is probably concentrated at the site of budding and incorporated into the virions possibly by contacts between the cytoplasmic tail of Env and the N-terminus of Gag.</text>
</comment>
<comment type="subcellular location">
    <molecule>Surface protein gp120</molecule>
    <subcellularLocation>
        <location evidence="1">Virion membrane</location>
        <topology evidence="1">Peripheral membrane protein</topology>
    </subcellularLocation>
    <subcellularLocation>
        <location evidence="1">Host cell membrane</location>
        <topology evidence="1">Peripheral membrane protein</topology>
    </subcellularLocation>
    <subcellularLocation>
        <location evidence="4">Host endosome membrane</location>
        <topology evidence="4">Peripheral membrane protein</topology>
    </subcellularLocation>
    <text evidence="1">The surface protein is not anchored to the viral envelope, but associates with the extravirion surface through its binding to TM. It is probably concentrated at the site of budding and incorporated into the virions possibly by contacts between the cytoplasmic tail of Env and the N-terminus of Gag (By similarity).</text>
</comment>
<comment type="domain">
    <text evidence="1">Some of the most genetically diverse regions of the viral genome are present in Env. They are called variable regions 1 through 5 (V1 through V5). Coreceptor usage of gp120 is determined mainly by the primary structure of the third variable region (V3) in the outer domain of gp120. Binding to CCR5 involves a region adjacent in addition to V3 (By similarity).</text>
</comment>
<comment type="domain">
    <text evidence="1">The 17 amino acids long immunosuppressive region is present in many retroviral envelope proteins. Synthetic peptides derived from this relatively conserved sequence inhibit immune function in vitro and in vivo (By similarity).</text>
</comment>
<comment type="PTM">
    <text evidence="1">Specific enzymatic cleavages in vivo yield mature proteins. Envelope glycoproteins are synthesized as an inactive precursor that is heavily N-glycosylated and processed likely by host cell furin in the Golgi to yield the mature SU and TM proteins. The cleavage site between SU and TM requires the minimal sequence [KR]-X-[KR]-R (By similarity).</text>
</comment>
<comment type="PTM">
    <text evidence="1">Palmitoylation of the transmembrane protein and of Env polyprotein (prior to its proteolytic cleavage) is essential for their association with host cell membrane lipid rafts. Palmitoylation is therefore required for envelope trafficking to classical lipid rafts, but not for viral replication (By similarity).</text>
</comment>
<comment type="miscellaneous">
    <text>Some HIV-2 isolates have been described that can infect cells independently of CD4, using CXCR4 as primary receptor. These isolates may have an exposed coreceptor binding site.</text>
</comment>
<feature type="signal peptide" evidence="2">
    <location>
        <begin position="1"/>
        <end position="24"/>
    </location>
</feature>
<feature type="chain" id="PRO_0000239497" description="Envelope glycoprotein gp160">
    <location>
        <begin position="25"/>
        <end position="859"/>
    </location>
</feature>
<feature type="chain" id="PRO_0000038437" description="Surface protein gp120" evidence="1">
    <location>
        <begin position="25"/>
        <end position="512"/>
    </location>
</feature>
<feature type="chain" id="PRO_0000038438" description="Transmembrane protein gp41" evidence="1">
    <location>
        <begin position="513"/>
        <end position="859"/>
    </location>
</feature>
<feature type="topological domain" description="Extracellular" evidence="2">
    <location>
        <begin position="25"/>
        <end position="680"/>
    </location>
</feature>
<feature type="transmembrane region" description="Helical" evidence="2">
    <location>
        <begin position="681"/>
        <end position="701"/>
    </location>
</feature>
<feature type="topological domain" description="Cytoplasmic" evidence="2">
    <location>
        <begin position="702"/>
        <end position="859"/>
    </location>
</feature>
<feature type="region of interest" description="V1">
    <location>
        <begin position="114"/>
        <end position="159"/>
    </location>
</feature>
<feature type="region of interest" description="V2">
    <location>
        <begin position="160"/>
        <end position="204"/>
    </location>
</feature>
<feature type="region of interest" description="V3">
    <location>
        <begin position="304"/>
        <end position="337"/>
    </location>
</feature>
<feature type="region of interest" description="V4">
    <location>
        <begin position="397"/>
        <end position="420"/>
    </location>
</feature>
<feature type="region of interest" description="V5">
    <location>
        <begin position="463"/>
        <end position="470"/>
    </location>
</feature>
<feature type="region of interest" description="Fusion peptide" evidence="2">
    <location>
        <begin position="513"/>
        <end position="533"/>
    </location>
</feature>
<feature type="region of interest" description="Immunosuppression" evidence="1">
    <location>
        <begin position="576"/>
        <end position="592"/>
    </location>
</feature>
<feature type="region of interest" description="MPER; binding to GalCer" evidence="1">
    <location>
        <begin position="658"/>
        <end position="679"/>
    </location>
</feature>
<feature type="region of interest" description="Disordered" evidence="3">
    <location>
        <begin position="726"/>
        <end position="745"/>
    </location>
</feature>
<feature type="coiled-coil region" evidence="2">
    <location>
        <begin position="625"/>
        <end position="646"/>
    </location>
</feature>
<feature type="short sequence motif" description="YXXV motif; contains endocytosis signal" evidence="1">
    <location>
        <begin position="708"/>
        <end position="711"/>
    </location>
</feature>
<feature type="short sequence motif" description="Di-leucine internalization motif" evidence="1">
    <location>
        <begin position="858"/>
        <end position="859"/>
    </location>
</feature>
<feature type="site" description="Cleavage; by host furin" evidence="1">
    <location>
        <begin position="512"/>
        <end position="513"/>
    </location>
</feature>
<feature type="lipid moiety-binding region" description="S-palmitoyl cysteine; by host" evidence="1">
    <location>
        <position position="774"/>
    </location>
</feature>
<feature type="glycosylation site" description="N-linked (GlcNAc...) asparagine; by host" evidence="2">
    <location>
        <position position="38"/>
    </location>
</feature>
<feature type="glycosylation site" description="N-linked (GlcNAc...) asparagine; by host" evidence="2">
    <location>
        <position position="71"/>
    </location>
</feature>
<feature type="glycosylation site" description="N-linked (GlcNAc...) asparagine; by host" evidence="2">
    <location>
        <position position="115"/>
    </location>
</feature>
<feature type="glycosylation site" description="N-linked (GlcNAc...) asparagine; by host" evidence="2">
    <location>
        <position position="148"/>
    </location>
</feature>
<feature type="glycosylation site" description="N-linked (GlcNAc...) asparagine; by host" evidence="2">
    <location>
        <position position="163"/>
    </location>
</feature>
<feature type="glycosylation site" description="N-linked (GlcNAc...) asparagine; by host" evidence="2">
    <location>
        <position position="176"/>
    </location>
</feature>
<feature type="glycosylation site" description="N-linked (GlcNAc...) asparagine; by host" evidence="2">
    <location>
        <position position="188"/>
    </location>
</feature>
<feature type="glycosylation site" description="N-linked (GlcNAc...) asparagine; by host" evidence="2">
    <location>
        <position position="195"/>
    </location>
</feature>
<feature type="glycosylation site" description="N-linked (GlcNAc...) asparagine; by host" evidence="2">
    <location>
        <position position="205"/>
    </location>
</feature>
<feature type="glycosylation site" description="N-linked (GlcNAc...) asparagine; by host" evidence="2">
    <location>
        <position position="237"/>
    </location>
</feature>
<feature type="glycosylation site" description="N-linked (GlcNAc...) asparagine; by host" evidence="2">
    <location>
        <position position="247"/>
    </location>
</feature>
<feature type="glycosylation site" description="N-linked (GlcNAc...) asparagine; by host" evidence="2">
    <location>
        <position position="271"/>
    </location>
</feature>
<feature type="glycosylation site" description="N-linked (GlcNAc...) asparagine; by host" evidence="2">
    <location>
        <position position="277"/>
    </location>
</feature>
<feature type="glycosylation site" description="N-linked (GlcNAc...) asparagine; by host" evidence="2">
    <location>
        <position position="288"/>
    </location>
</feature>
<feature type="glycosylation site" description="N-linked (GlcNAc...) asparagine; by host" evidence="2">
    <location>
        <position position="299"/>
    </location>
</feature>
<feature type="glycosylation site" description="N-linked (GlcNAc...) asparagine; by host" evidence="2">
    <location>
        <position position="309"/>
    </location>
</feature>
<feature type="glycosylation site" description="N-linked (GlcNAc...) asparagine; by host" evidence="2">
    <location>
        <position position="343"/>
    </location>
</feature>
<feature type="glycosylation site" description="N-linked (GlcNAc...) asparagine; by host" evidence="2">
    <location>
        <position position="366"/>
    </location>
</feature>
<feature type="glycosylation site" description="N-linked (GlcNAc...) asparagine; by host" evidence="2">
    <location>
        <position position="398"/>
    </location>
</feature>
<feature type="glycosylation site" description="N-linked (GlcNAc...) asparagine; by host" evidence="2">
    <location>
        <position position="411"/>
    </location>
</feature>
<feature type="glycosylation site" description="N-linked (GlcNAc...) asparagine; by host" evidence="2">
    <location>
        <position position="448"/>
    </location>
</feature>
<feature type="glycosylation site" description="N-linked (GlcNAc...) asparagine; by host" evidence="2">
    <location>
        <position position="463"/>
    </location>
</feature>
<feature type="glycosylation site" description="N-linked (GlcNAc...) asparagine; by host" evidence="2">
    <location>
        <position position="467"/>
    </location>
</feature>
<feature type="glycosylation site" description="N-linked (GlcNAc...) asparagine; by host" evidence="2">
    <location>
        <position position="612"/>
    </location>
</feature>
<feature type="glycosylation site" description="N-linked (GlcNAc...) asparagine; by host" evidence="2">
    <location>
        <position position="621"/>
    </location>
</feature>
<feature type="glycosylation site" description="N-linked (GlcNAc...) asparagine; by host" evidence="2">
    <location>
        <position position="637"/>
    </location>
</feature>
<feature type="disulfide bond" evidence="1">
    <location>
        <begin position="45"/>
        <end position="58"/>
    </location>
</feature>
<feature type="disulfide bond" evidence="1">
    <location>
        <begin position="102"/>
        <end position="213"/>
    </location>
</feature>
<feature type="disulfide bond" evidence="1">
    <location>
        <begin position="109"/>
        <end position="204"/>
    </location>
</feature>
<feature type="disulfide bond" evidence="1">
    <location>
        <begin position="114"/>
        <end position="160"/>
    </location>
</feature>
<feature type="disulfide bond" evidence="1">
    <location>
        <begin position="226"/>
        <end position="256"/>
    </location>
</feature>
<feature type="disulfide bond" evidence="1">
    <location>
        <begin position="236"/>
        <end position="248"/>
    </location>
</feature>
<feature type="disulfide bond" evidence="1">
    <location>
        <begin position="304"/>
        <end position="338"/>
    </location>
</feature>
<feature type="disulfide bond" evidence="1">
    <location>
        <begin position="390"/>
        <end position="447"/>
    </location>
</feature>
<feature type="disulfide bond" evidence="1">
    <location>
        <begin position="397"/>
        <end position="420"/>
    </location>
</feature>
<proteinExistence type="inferred from homology"/>